<protein>
    <recommendedName>
        <fullName>Endo-1,4-beta-xylanase 5</fullName>
        <shortName>Xylanase 5</shortName>
        <ecNumber>3.2.1.8</ecNumber>
    </recommendedName>
    <alternativeName>
        <fullName>1,4-beta-D-xylan xylanohydrolase 5</fullName>
    </alternativeName>
</protein>
<dbReference type="EC" id="3.2.1.8"/>
<dbReference type="EMBL" id="AY144348">
    <property type="protein sequence ID" value="AAN60060.1"/>
    <property type="molecule type" value="Genomic_DNA"/>
</dbReference>
<dbReference type="SMR" id="Q8J1Y4"/>
<dbReference type="GlyCosmos" id="Q8J1Y4">
    <property type="glycosylation" value="3 sites, No reported glycans"/>
</dbReference>
<dbReference type="OMA" id="GIADNHT"/>
<dbReference type="UniPathway" id="UPA00114"/>
<dbReference type="Proteomes" id="UP000515153">
    <property type="component" value="Unplaced"/>
</dbReference>
<dbReference type="GO" id="GO:0005576">
    <property type="term" value="C:extracellular region"/>
    <property type="evidence" value="ECO:0007669"/>
    <property type="project" value="UniProtKB-SubCell"/>
</dbReference>
<dbReference type="GO" id="GO:0005886">
    <property type="term" value="C:plasma membrane"/>
    <property type="evidence" value="ECO:0007669"/>
    <property type="project" value="UniProtKB-SubCell"/>
</dbReference>
<dbReference type="GO" id="GO:0098552">
    <property type="term" value="C:side of membrane"/>
    <property type="evidence" value="ECO:0007669"/>
    <property type="project" value="UniProtKB-KW"/>
</dbReference>
<dbReference type="GO" id="GO:0031176">
    <property type="term" value="F:endo-1,4-beta-xylanase activity"/>
    <property type="evidence" value="ECO:0007669"/>
    <property type="project" value="UniProtKB-EC"/>
</dbReference>
<dbReference type="GO" id="GO:0045493">
    <property type="term" value="P:xylan catabolic process"/>
    <property type="evidence" value="ECO:0007669"/>
    <property type="project" value="UniProtKB-UniPathway"/>
</dbReference>
<dbReference type="Gene3D" id="3.20.20.80">
    <property type="entry name" value="Glycosidases"/>
    <property type="match status" value="1"/>
</dbReference>
<dbReference type="InterPro" id="IPR044846">
    <property type="entry name" value="GH10"/>
</dbReference>
<dbReference type="InterPro" id="IPR001000">
    <property type="entry name" value="GH10_dom"/>
</dbReference>
<dbReference type="InterPro" id="IPR017853">
    <property type="entry name" value="Glycoside_hydrolase_SF"/>
</dbReference>
<dbReference type="PANTHER" id="PTHR31490:SF35">
    <property type="entry name" value="ENDO-1,4-BETA-XYLANASE"/>
    <property type="match status" value="1"/>
</dbReference>
<dbReference type="PANTHER" id="PTHR31490">
    <property type="entry name" value="GLYCOSYL HYDROLASE"/>
    <property type="match status" value="1"/>
</dbReference>
<dbReference type="Pfam" id="PF00331">
    <property type="entry name" value="Glyco_hydro_10"/>
    <property type="match status" value="1"/>
</dbReference>
<dbReference type="PRINTS" id="PR00134">
    <property type="entry name" value="GLHYDRLASE10"/>
</dbReference>
<dbReference type="SMART" id="SM00633">
    <property type="entry name" value="Glyco_10"/>
    <property type="match status" value="1"/>
</dbReference>
<dbReference type="SUPFAM" id="SSF51445">
    <property type="entry name" value="(Trans)glycosidases"/>
    <property type="match status" value="1"/>
</dbReference>
<dbReference type="PROSITE" id="PS51760">
    <property type="entry name" value="GH10_2"/>
    <property type="match status" value="1"/>
</dbReference>
<organism>
    <name type="scientific">Pyricularia grisea</name>
    <name type="common">Crabgrass-specific blast fungus</name>
    <name type="synonym">Magnaporthe grisea</name>
    <dbReference type="NCBI Taxonomy" id="148305"/>
    <lineage>
        <taxon>Eukaryota</taxon>
        <taxon>Fungi</taxon>
        <taxon>Dikarya</taxon>
        <taxon>Ascomycota</taxon>
        <taxon>Pezizomycotina</taxon>
        <taxon>Sordariomycetes</taxon>
        <taxon>Sordariomycetidae</taxon>
        <taxon>Magnaporthales</taxon>
        <taxon>Pyriculariaceae</taxon>
        <taxon>Pyricularia</taxon>
    </lineage>
</organism>
<proteinExistence type="inferred from homology"/>
<evidence type="ECO:0000250" key="1"/>
<evidence type="ECO:0000255" key="2"/>
<evidence type="ECO:0000255" key="3">
    <source>
        <dbReference type="PROSITE-ProRule" id="PRU01096"/>
    </source>
</evidence>
<evidence type="ECO:0000305" key="4"/>
<feature type="signal peptide" evidence="2">
    <location>
        <begin position="1"/>
        <end position="22"/>
    </location>
</feature>
<feature type="chain" id="PRO_0000429627" description="Endo-1,4-beta-xylanase 5">
    <location>
        <begin position="23"/>
        <end position="380"/>
    </location>
</feature>
<feature type="propeptide" id="PRO_0000429628" description="Removed in mature form" evidence="2">
    <location>
        <begin position="381"/>
        <end position="405"/>
    </location>
</feature>
<feature type="domain" description="GH10" evidence="3">
    <location>
        <begin position="32"/>
        <end position="352"/>
    </location>
</feature>
<feature type="active site" description="Proton donor" evidence="1">
    <location>
        <position position="166"/>
    </location>
</feature>
<feature type="active site" description="Nucleophile" evidence="1">
    <location>
        <position position="273"/>
    </location>
</feature>
<feature type="lipid moiety-binding region" description="GPI-anchor amidated glycine" evidence="2">
    <location>
        <position position="380"/>
    </location>
</feature>
<feature type="glycosylation site" description="N-linked (GlcNAc...) asparagine" evidence="2">
    <location>
        <position position="27"/>
    </location>
</feature>
<feature type="glycosylation site" description="N-linked (GlcNAc...) asparagine" evidence="2">
    <location>
        <position position="69"/>
    </location>
</feature>
<feature type="glycosylation site" description="N-linked (GlcNAc...) asparagine" evidence="2">
    <location>
        <position position="171"/>
    </location>
</feature>
<feature type="disulfide bond" evidence="1">
    <location>
        <begin position="302"/>
        <end position="308"/>
    </location>
</feature>
<keyword id="KW-0119">Carbohydrate metabolism</keyword>
<keyword id="KW-1003">Cell membrane</keyword>
<keyword id="KW-1015">Disulfide bond</keyword>
<keyword id="KW-0325">Glycoprotein</keyword>
<keyword id="KW-0326">Glycosidase</keyword>
<keyword id="KW-0336">GPI-anchor</keyword>
<keyword id="KW-0378">Hydrolase</keyword>
<keyword id="KW-0449">Lipoprotein</keyword>
<keyword id="KW-0472">Membrane</keyword>
<keyword id="KW-0624">Polysaccharide degradation</keyword>
<keyword id="KW-1185">Reference proteome</keyword>
<keyword id="KW-0964">Secreted</keyword>
<keyword id="KW-0732">Signal</keyword>
<keyword id="KW-0858">Xylan degradation</keyword>
<reference key="1">
    <citation type="submission" date="2002-08" db="EMBL/GenBank/DDBJ databases">
        <title>Three differentially expressed xylanases from the rice blast fungus are required for pathogenicity.</title>
        <authorList>
            <person name="Wu S.-C."/>
            <person name="Darvill A.G."/>
            <person name="Albersheim P."/>
        </authorList>
    </citation>
    <scope>NUCLEOTIDE SEQUENCE [GENOMIC DNA]</scope>
</reference>
<accession>Q8J1Y4</accession>
<gene>
    <name type="primary">XYL5</name>
</gene>
<name>XYN5_PYRGI</name>
<comment type="function">
    <text>Endo-1,4-beta-xylanase involved in the hydrolysis of xylan, a major structural heterogeneous polysaccharide found in plant biomass representing the second most abundant polysaccharide in the biosphere, after cellulose.</text>
</comment>
<comment type="catalytic activity">
    <reaction>
        <text>Endohydrolysis of (1-&gt;4)-beta-D-xylosidic linkages in xylans.</text>
        <dbReference type="EC" id="3.2.1.8"/>
    </reaction>
</comment>
<comment type="pathway">
    <text>Glycan degradation; xylan degradation.</text>
</comment>
<comment type="subcellular location">
    <subcellularLocation>
        <location evidence="4">Cell membrane</location>
        <topology evidence="4">Lipid-anchor</topology>
        <topology evidence="4">GPI-anchor</topology>
    </subcellularLocation>
    <subcellularLocation>
        <location evidence="1">Secreted</location>
    </subcellularLocation>
</comment>
<comment type="similarity">
    <text evidence="4">Belongs to the glycosyl hydrolase 10 (cellulase F) family.</text>
</comment>
<sequence length="405" mass="43247">MTRLATLITLAGLLAVSPGAYAQRNRNDTGGSTGAEGLNSLAVKAGLLYFGTASDTRNFADEPYMSVVNNTNEFGMIVPENSMKWEATEKEPGRFSFANADRVRALTKANGQMLRCHALTWHSQLPNFVKTTAWTRDTLTAAIESHISNEVGHFAGDCYAWDVVNEAVNENGSFRDSPFHRTLGTDFLAISFRAAAAADPNAKLYYNDFNIETPGPKANAAMGIVRLLKEQGVRIDGVGFQGHLTVGSTPSRAQLASQLQRFADLGVEVTYTELDIRHKSLPVSSRAAQDQARDYVSVIGSCLDVTACVGVMVWQPTDKYSWIPETFPGTGDACLFDANMNPKPAYTSVSSLLAAAAATAPASVVPPASVTTSKTPIQAGAGRETVSIAGLTLALSSLAFGMFML</sequence>